<accession>P0A9J7</accession>
<accession>P05054</accession>
<reference key="1">
    <citation type="journal article" date="2001" name="Nature">
        <title>Genome sequence of enterohaemorrhagic Escherichia coli O157:H7.</title>
        <authorList>
            <person name="Perna N.T."/>
            <person name="Plunkett G. III"/>
            <person name="Burland V."/>
            <person name="Mau B."/>
            <person name="Glasner J.D."/>
            <person name="Rose D.J."/>
            <person name="Mayhew G.F."/>
            <person name="Evans P.S."/>
            <person name="Gregor J."/>
            <person name="Kirkpatrick H.A."/>
            <person name="Posfai G."/>
            <person name="Hackett J."/>
            <person name="Klink S."/>
            <person name="Boutin A."/>
            <person name="Shao Y."/>
            <person name="Miller L."/>
            <person name="Grotbeck E.J."/>
            <person name="Davis N.W."/>
            <person name="Lim A."/>
            <person name="Dimalanta E.T."/>
            <person name="Potamousis K."/>
            <person name="Apodaca J."/>
            <person name="Anantharaman T.S."/>
            <person name="Lin J."/>
            <person name="Yen G."/>
            <person name="Schwartz D.C."/>
            <person name="Welch R.A."/>
            <person name="Blattner F.R."/>
        </authorList>
    </citation>
    <scope>NUCLEOTIDE SEQUENCE [LARGE SCALE GENOMIC DNA]</scope>
    <source>
        <strain>O157:H7 / EDL933 / ATCC 700927 / EHEC</strain>
    </source>
</reference>
<reference key="2">
    <citation type="journal article" date="2001" name="DNA Res.">
        <title>Complete genome sequence of enterohemorrhagic Escherichia coli O157:H7 and genomic comparison with a laboratory strain K-12.</title>
        <authorList>
            <person name="Hayashi T."/>
            <person name="Makino K."/>
            <person name="Ohnishi M."/>
            <person name="Kurokawa K."/>
            <person name="Ishii K."/>
            <person name="Yokoyama K."/>
            <person name="Han C.-G."/>
            <person name="Ohtsubo E."/>
            <person name="Nakayama K."/>
            <person name="Murata T."/>
            <person name="Tanaka M."/>
            <person name="Tobe T."/>
            <person name="Iida T."/>
            <person name="Takami H."/>
            <person name="Honda T."/>
            <person name="Sasakawa C."/>
            <person name="Ogasawara N."/>
            <person name="Yasunaga T."/>
            <person name="Kuhara S."/>
            <person name="Shiba T."/>
            <person name="Hattori M."/>
            <person name="Shinagawa H."/>
        </authorList>
    </citation>
    <scope>NUCLEOTIDE SEQUENCE [LARGE SCALE GENOMIC DNA]</scope>
    <source>
        <strain>O157:H7 / Sakai / RIMD 0509952 / EHEC</strain>
    </source>
</reference>
<name>RBSK_ECO57</name>
<evidence type="ECO:0000255" key="1">
    <source>
        <dbReference type="HAMAP-Rule" id="MF_01987"/>
    </source>
</evidence>
<sequence length="309" mass="32291">MQNAGSLVVLGSINADHILNLQSFPTPGETVTGNHYQVAFGGKGANQAVAAGRSGANIAFIACTGDDSIGESVRQQLATDNIDITPVSVIKGESTGVALIFVNGEGENVIGIHAGANAALSPALVEAQRERIANASALLMQLESPLESVMAAAKIAHQNKTIVALNPAPARELPDELLALVDIITPNETEAEKLTGIRVENDEDAAKAAQVLHEKGIRTVLITLGSRGVWASVNGEGQRVPGFRVQAVDTIAAGDTFNGALITALLEEKPLPEAIRFAHAAAAIAVTRKGAQPSVPWREEIDAFLDRQR</sequence>
<protein>
    <recommendedName>
        <fullName evidence="1">Ribokinase</fullName>
        <shortName evidence="1">RK</shortName>
        <ecNumber evidence="1">2.7.1.15</ecNumber>
    </recommendedName>
</protein>
<feature type="chain" id="PRO_0000080098" description="Ribokinase">
    <location>
        <begin position="1"/>
        <end position="309"/>
    </location>
</feature>
<feature type="active site" description="Proton acceptor" evidence="1">
    <location>
        <position position="255"/>
    </location>
</feature>
<feature type="binding site" evidence="1">
    <location>
        <begin position="14"/>
        <end position="16"/>
    </location>
    <ligand>
        <name>substrate</name>
    </ligand>
</feature>
<feature type="binding site" evidence="1">
    <location>
        <begin position="42"/>
        <end position="46"/>
    </location>
    <ligand>
        <name>substrate</name>
    </ligand>
</feature>
<feature type="binding site" evidence="1">
    <location>
        <position position="143"/>
    </location>
    <ligand>
        <name>substrate</name>
    </ligand>
</feature>
<feature type="binding site" evidence="1">
    <location>
        <position position="187"/>
    </location>
    <ligand>
        <name>ATP</name>
        <dbReference type="ChEBI" id="CHEBI:30616"/>
    </ligand>
</feature>
<feature type="binding site" evidence="1">
    <location>
        <begin position="223"/>
        <end position="228"/>
    </location>
    <ligand>
        <name>ATP</name>
        <dbReference type="ChEBI" id="CHEBI:30616"/>
    </ligand>
</feature>
<feature type="binding site" evidence="1">
    <location>
        <position position="249"/>
    </location>
    <ligand>
        <name>K(+)</name>
        <dbReference type="ChEBI" id="CHEBI:29103"/>
    </ligand>
</feature>
<feature type="binding site" evidence="1">
    <location>
        <position position="251"/>
    </location>
    <ligand>
        <name>K(+)</name>
        <dbReference type="ChEBI" id="CHEBI:29103"/>
    </ligand>
</feature>
<feature type="binding site" evidence="1">
    <location>
        <begin position="254"/>
        <end position="255"/>
    </location>
    <ligand>
        <name>ATP</name>
        <dbReference type="ChEBI" id="CHEBI:30616"/>
    </ligand>
</feature>
<feature type="binding site" evidence="1">
    <location>
        <position position="255"/>
    </location>
    <ligand>
        <name>substrate</name>
    </ligand>
</feature>
<feature type="binding site" evidence="1">
    <location>
        <position position="279"/>
    </location>
    <ligand>
        <name>ATP</name>
        <dbReference type="ChEBI" id="CHEBI:30616"/>
    </ligand>
</feature>
<feature type="binding site" evidence="1">
    <location>
        <position position="285"/>
    </location>
    <ligand>
        <name>K(+)</name>
        <dbReference type="ChEBI" id="CHEBI:29103"/>
    </ligand>
</feature>
<feature type="binding site" evidence="1">
    <location>
        <position position="288"/>
    </location>
    <ligand>
        <name>K(+)</name>
        <dbReference type="ChEBI" id="CHEBI:29103"/>
    </ligand>
</feature>
<feature type="binding site" evidence="1">
    <location>
        <position position="290"/>
    </location>
    <ligand>
        <name>K(+)</name>
        <dbReference type="ChEBI" id="CHEBI:29103"/>
    </ligand>
</feature>
<feature type="binding site" evidence="1">
    <location>
        <position position="294"/>
    </location>
    <ligand>
        <name>K(+)</name>
        <dbReference type="ChEBI" id="CHEBI:29103"/>
    </ligand>
</feature>
<keyword id="KW-0067">ATP-binding</keyword>
<keyword id="KW-0119">Carbohydrate metabolism</keyword>
<keyword id="KW-0963">Cytoplasm</keyword>
<keyword id="KW-0418">Kinase</keyword>
<keyword id="KW-0460">Magnesium</keyword>
<keyword id="KW-0479">Metal-binding</keyword>
<keyword id="KW-0547">Nucleotide-binding</keyword>
<keyword id="KW-0630">Potassium</keyword>
<keyword id="KW-1185">Reference proteome</keyword>
<keyword id="KW-0808">Transferase</keyword>
<organism>
    <name type="scientific">Escherichia coli O157:H7</name>
    <dbReference type="NCBI Taxonomy" id="83334"/>
    <lineage>
        <taxon>Bacteria</taxon>
        <taxon>Pseudomonadati</taxon>
        <taxon>Pseudomonadota</taxon>
        <taxon>Gammaproteobacteria</taxon>
        <taxon>Enterobacterales</taxon>
        <taxon>Enterobacteriaceae</taxon>
        <taxon>Escherichia</taxon>
    </lineage>
</organism>
<dbReference type="EC" id="2.7.1.15" evidence="1"/>
<dbReference type="EMBL" id="AE005174">
    <property type="protein sequence ID" value="AAG58955.1"/>
    <property type="molecule type" value="Genomic_DNA"/>
</dbReference>
<dbReference type="EMBL" id="BA000007">
    <property type="protein sequence ID" value="BAB38117.1"/>
    <property type="molecule type" value="Genomic_DNA"/>
</dbReference>
<dbReference type="PIR" id="F91215">
    <property type="entry name" value="F91215"/>
</dbReference>
<dbReference type="PIR" id="G86061">
    <property type="entry name" value="G86061"/>
</dbReference>
<dbReference type="RefSeq" id="NP_312721.1">
    <property type="nucleotide sequence ID" value="NC_002695.1"/>
</dbReference>
<dbReference type="RefSeq" id="WP_001300603.1">
    <property type="nucleotide sequence ID" value="NZ_VOAI01000011.1"/>
</dbReference>
<dbReference type="SMR" id="P0A9J7"/>
<dbReference type="STRING" id="155864.Z5253"/>
<dbReference type="GeneID" id="915323"/>
<dbReference type="GeneID" id="93778197"/>
<dbReference type="KEGG" id="ece:Z5253"/>
<dbReference type="KEGG" id="ecs:ECs_4694"/>
<dbReference type="PATRIC" id="fig|386585.9.peg.4900"/>
<dbReference type="eggNOG" id="COG0524">
    <property type="taxonomic scope" value="Bacteria"/>
</dbReference>
<dbReference type="HOGENOM" id="CLU_027634_2_0_6"/>
<dbReference type="OMA" id="DIVLIQQ"/>
<dbReference type="UniPathway" id="UPA00916">
    <property type="reaction ID" value="UER00889"/>
</dbReference>
<dbReference type="Proteomes" id="UP000000558">
    <property type="component" value="Chromosome"/>
</dbReference>
<dbReference type="Proteomes" id="UP000002519">
    <property type="component" value="Chromosome"/>
</dbReference>
<dbReference type="GO" id="GO:0005829">
    <property type="term" value="C:cytosol"/>
    <property type="evidence" value="ECO:0007669"/>
    <property type="project" value="TreeGrafter"/>
</dbReference>
<dbReference type="GO" id="GO:0005524">
    <property type="term" value="F:ATP binding"/>
    <property type="evidence" value="ECO:0007669"/>
    <property type="project" value="UniProtKB-UniRule"/>
</dbReference>
<dbReference type="GO" id="GO:0046872">
    <property type="term" value="F:metal ion binding"/>
    <property type="evidence" value="ECO:0007669"/>
    <property type="project" value="UniProtKB-KW"/>
</dbReference>
<dbReference type="GO" id="GO:0004747">
    <property type="term" value="F:ribokinase activity"/>
    <property type="evidence" value="ECO:0007669"/>
    <property type="project" value="UniProtKB-UniRule"/>
</dbReference>
<dbReference type="GO" id="GO:0019303">
    <property type="term" value="P:D-ribose catabolic process"/>
    <property type="evidence" value="ECO:0007669"/>
    <property type="project" value="UniProtKB-UniRule"/>
</dbReference>
<dbReference type="CDD" id="cd01174">
    <property type="entry name" value="ribokinase"/>
    <property type="match status" value="1"/>
</dbReference>
<dbReference type="FunFam" id="3.40.1190.20:FF:000012">
    <property type="entry name" value="Ribokinase"/>
    <property type="match status" value="1"/>
</dbReference>
<dbReference type="Gene3D" id="3.40.1190.20">
    <property type="match status" value="1"/>
</dbReference>
<dbReference type="HAMAP" id="MF_01987">
    <property type="entry name" value="Ribokinase"/>
    <property type="match status" value="1"/>
</dbReference>
<dbReference type="InterPro" id="IPR002173">
    <property type="entry name" value="Carboh/pur_kinase_PfkB_CS"/>
</dbReference>
<dbReference type="InterPro" id="IPR011611">
    <property type="entry name" value="PfkB_dom"/>
</dbReference>
<dbReference type="InterPro" id="IPR002139">
    <property type="entry name" value="Ribo/fructo_kinase"/>
</dbReference>
<dbReference type="InterPro" id="IPR011877">
    <property type="entry name" value="Ribokinase"/>
</dbReference>
<dbReference type="InterPro" id="IPR029056">
    <property type="entry name" value="Ribokinase-like"/>
</dbReference>
<dbReference type="NCBIfam" id="TIGR02152">
    <property type="entry name" value="D_ribokin_bact"/>
    <property type="match status" value="1"/>
</dbReference>
<dbReference type="NCBIfam" id="NF008353">
    <property type="entry name" value="PRK11142.1"/>
    <property type="match status" value="1"/>
</dbReference>
<dbReference type="PANTHER" id="PTHR10584:SF166">
    <property type="entry name" value="RIBOKINASE"/>
    <property type="match status" value="1"/>
</dbReference>
<dbReference type="PANTHER" id="PTHR10584">
    <property type="entry name" value="SUGAR KINASE"/>
    <property type="match status" value="1"/>
</dbReference>
<dbReference type="Pfam" id="PF00294">
    <property type="entry name" value="PfkB"/>
    <property type="match status" value="1"/>
</dbReference>
<dbReference type="PRINTS" id="PR00990">
    <property type="entry name" value="RIBOKINASE"/>
</dbReference>
<dbReference type="SUPFAM" id="SSF53613">
    <property type="entry name" value="Ribokinase-like"/>
    <property type="match status" value="1"/>
</dbReference>
<dbReference type="PROSITE" id="PS00584">
    <property type="entry name" value="PFKB_KINASES_2"/>
    <property type="match status" value="1"/>
</dbReference>
<comment type="function">
    <text evidence="1">Catalyzes the phosphorylation of ribose at O-5 in a reaction requiring ATP and magnesium. The resulting D-ribose-5-phosphate can then be used either for sythesis of nucleotides, histidine, and tryptophan, or as a component of the pentose phosphate pathway.</text>
</comment>
<comment type="catalytic activity">
    <reaction evidence="1">
        <text>D-ribose + ATP = D-ribose 5-phosphate + ADP + H(+)</text>
        <dbReference type="Rhea" id="RHEA:13697"/>
        <dbReference type="ChEBI" id="CHEBI:15378"/>
        <dbReference type="ChEBI" id="CHEBI:30616"/>
        <dbReference type="ChEBI" id="CHEBI:47013"/>
        <dbReference type="ChEBI" id="CHEBI:78346"/>
        <dbReference type="ChEBI" id="CHEBI:456216"/>
        <dbReference type="EC" id="2.7.1.15"/>
    </reaction>
</comment>
<comment type="cofactor">
    <cofactor evidence="1">
        <name>Mg(2+)</name>
        <dbReference type="ChEBI" id="CHEBI:18420"/>
    </cofactor>
    <text evidence="1">Requires a divalent cation, most likely magnesium in vivo, as an electrophilic catalyst to aid phosphoryl group transfer. It is the chelate of the metal and the nucleotide that is the actual substrate.</text>
</comment>
<comment type="activity regulation">
    <text evidence="1">Activated by a monovalent cation that binds near, but not in, the active site. The most likely occupant of the site in vivo is potassium. Ion binding induces a conformational change that may alter substrate affinity.</text>
</comment>
<comment type="pathway">
    <text evidence="1">Carbohydrate metabolism; D-ribose degradation; D-ribose 5-phosphate from beta-D-ribopyranose: step 2/2.</text>
</comment>
<comment type="subunit">
    <text evidence="1">Homodimer.</text>
</comment>
<comment type="subcellular location">
    <subcellularLocation>
        <location evidence="1">Cytoplasm</location>
    </subcellularLocation>
</comment>
<comment type="similarity">
    <text evidence="1">Belongs to the carbohydrate kinase PfkB family. Ribokinase subfamily.</text>
</comment>
<proteinExistence type="inferred from homology"/>
<gene>
    <name evidence="1" type="primary">rbsK</name>
    <name type="ordered locus">Z5253</name>
    <name type="ordered locus">ECs4694</name>
</gene>